<organism>
    <name type="scientific">Bos taurus</name>
    <name type="common">Bovine</name>
    <dbReference type="NCBI Taxonomy" id="9913"/>
    <lineage>
        <taxon>Eukaryota</taxon>
        <taxon>Metazoa</taxon>
        <taxon>Chordata</taxon>
        <taxon>Craniata</taxon>
        <taxon>Vertebrata</taxon>
        <taxon>Euteleostomi</taxon>
        <taxon>Mammalia</taxon>
        <taxon>Eutheria</taxon>
        <taxon>Laurasiatheria</taxon>
        <taxon>Artiodactyla</taxon>
        <taxon>Ruminantia</taxon>
        <taxon>Pecora</taxon>
        <taxon>Bovidae</taxon>
        <taxon>Bovinae</taxon>
        <taxon>Bos</taxon>
    </lineage>
</organism>
<sequence length="118" mass="13253">MSRHSRLQRQVLSLYRELLRAGRGKPGAEARVRAEFRQHACLPRSDVLRIEYLYRRGRRQLQMLRSGHATAMGAFVRTRGPTEESNGAGAPGTLSGEGDDPRKPLDSMRTPKTPLDGR</sequence>
<keyword id="KW-0143">Chaperone</keyword>
<keyword id="KW-0496">Mitochondrion</keyword>
<keyword id="KW-1185">Reference proteome</keyword>
<keyword id="KW-0677">Repeat</keyword>
<feature type="chain" id="PRO_0000327915" description="Succinate dehydrogenase assembly factor 1, mitochondrial">
    <location>
        <begin position="1"/>
        <end position="118"/>
    </location>
</feature>
<feature type="region of interest" description="Interaction with SDHB" evidence="1">
    <location>
        <begin position="53"/>
        <end position="65"/>
    </location>
</feature>
<feature type="region of interest" description="Disordered" evidence="3">
    <location>
        <begin position="72"/>
        <end position="118"/>
    </location>
</feature>
<feature type="short sequence motif" description="LYR motif 1; required for interaction with HSC20" evidence="1">
    <location>
        <begin position="14"/>
        <end position="16"/>
    </location>
</feature>
<feature type="short sequence motif" description="LYR motif 2; not required for interaction with HSC20" evidence="1">
    <location>
        <begin position="53"/>
        <end position="55"/>
    </location>
</feature>
<dbReference type="EMBL" id="BC112496">
    <property type="protein sequence ID" value="AAI12497.1"/>
    <property type="molecule type" value="mRNA"/>
</dbReference>
<dbReference type="RefSeq" id="NP_001103912.1">
    <property type="nucleotide sequence ID" value="NM_001110442.2"/>
</dbReference>
<dbReference type="SMR" id="A8PU71"/>
<dbReference type="FunCoup" id="A8PU71">
    <property type="interactions" value="556"/>
</dbReference>
<dbReference type="STRING" id="9913.ENSBTAP00000050423"/>
<dbReference type="PaxDb" id="9913-ENSBTAP00000050423"/>
<dbReference type="GeneID" id="784051"/>
<dbReference type="KEGG" id="bta:784051"/>
<dbReference type="CTD" id="644096"/>
<dbReference type="VEuPathDB" id="HostDB:ENSBTAG00000037461"/>
<dbReference type="eggNOG" id="KOG4620">
    <property type="taxonomic scope" value="Eukaryota"/>
</dbReference>
<dbReference type="HOGENOM" id="CLU_154777_0_1_1"/>
<dbReference type="InParanoid" id="A8PU71"/>
<dbReference type="OMA" id="MGTFVRP"/>
<dbReference type="OrthoDB" id="273010at2759"/>
<dbReference type="TreeFam" id="TF344152"/>
<dbReference type="Reactome" id="R-BTA-9854311">
    <property type="pathway name" value="Maturation of TCA enzymes and regulation of TCA cycle"/>
</dbReference>
<dbReference type="Proteomes" id="UP000009136">
    <property type="component" value="Chromosome 18"/>
</dbReference>
<dbReference type="Bgee" id="ENSBTAG00000037461">
    <property type="expression patterns" value="Expressed in prostate gland and 105 other cell types or tissues"/>
</dbReference>
<dbReference type="GO" id="GO:0005759">
    <property type="term" value="C:mitochondrial matrix"/>
    <property type="evidence" value="ECO:0007669"/>
    <property type="project" value="UniProtKB-SubCell"/>
</dbReference>
<dbReference type="GO" id="GO:0005739">
    <property type="term" value="C:mitochondrion"/>
    <property type="evidence" value="ECO:0000250"/>
    <property type="project" value="UniProtKB"/>
</dbReference>
<dbReference type="GO" id="GO:0034553">
    <property type="term" value="P:mitochondrial respiratory chain complex II assembly"/>
    <property type="evidence" value="ECO:0000250"/>
    <property type="project" value="UniProtKB"/>
</dbReference>
<dbReference type="CDD" id="cd20268">
    <property type="entry name" value="Complex1_LYR_SDHAF1_LYRM8"/>
    <property type="match status" value="1"/>
</dbReference>
<dbReference type="InterPro" id="IPR008011">
    <property type="entry name" value="Complex1_LYR_dom"/>
</dbReference>
<dbReference type="InterPro" id="IPR045295">
    <property type="entry name" value="Complex1_LYR_SDHAF1_LYRM8"/>
</dbReference>
<dbReference type="InterPro" id="IPR052687">
    <property type="entry name" value="SDHAF1"/>
</dbReference>
<dbReference type="PANTHER" id="PTHR47046">
    <property type="entry name" value="SUCCINATE DEHYDROGENASE ASSEMBLY FACTOR 1, MITOCHONDRIAL"/>
    <property type="match status" value="1"/>
</dbReference>
<dbReference type="PANTHER" id="PTHR47046:SF1">
    <property type="entry name" value="SUCCINATE DEHYDROGENASE ASSEMBLY FACTOR 1, MITOCHONDRIAL"/>
    <property type="match status" value="1"/>
</dbReference>
<dbReference type="Pfam" id="PF05347">
    <property type="entry name" value="Complex1_LYR"/>
    <property type="match status" value="1"/>
</dbReference>
<proteinExistence type="inferred from homology"/>
<gene>
    <name evidence="1" type="primary">SDHAF1</name>
    <name evidence="1" type="synonym">LYRM8</name>
</gene>
<reference key="1">
    <citation type="submission" date="2006-01" db="EMBL/GenBank/DDBJ databases">
        <authorList>
            <consortium name="NIH - Mammalian Gene Collection (MGC) project"/>
        </authorList>
    </citation>
    <scope>NUCLEOTIDE SEQUENCE [LARGE SCALE MRNA]</scope>
    <source>
        <strain>Hereford</strain>
        <tissue>Testis</tissue>
    </source>
</reference>
<accession>A8PU71</accession>
<protein>
    <recommendedName>
        <fullName evidence="1">Succinate dehydrogenase assembly factor 1, mitochondrial</fullName>
        <shortName evidence="1">SDH assembly factor 1</shortName>
        <shortName evidence="1">SDHAF1</shortName>
    </recommendedName>
    <alternativeName>
        <fullName evidence="1">LYR motif-containing protein 8</fullName>
    </alternativeName>
</protein>
<name>SDHF1_BOVIN</name>
<comment type="function">
    <text evidence="1">Plays an essential role in the assembly of succinate dehydrogenase (SDH), an enzyme complex (also referred to as respiratory complex II) that is a component of both the tricarboxylic acid (TCA) cycle and the mitochondrial electron transport chain, and which couples the oxidation of succinate to fumarate with the reduction of ubiquinone (coenzyme Q) to ubiquinol. Promotes maturation of the iron-sulfur protein subunit SDHB of the SDH catalytic dimer, protecting it from the deleterious effects of oxidants. May act together with SDHAF3. Contributes to iron-sulfur cluster incorporation into SDHB by binding to SDHB and recruiting the iron-sulfur transfer complex formed by HSC20, HSPA9 and ISCU through direct binding to HSC20.</text>
</comment>
<comment type="subunit">
    <text evidence="2">Interacts with SDHB within an SDHA-SDHB subcomplex. Also interacts with the iron-sulfur transfer complex formed by HSC20, HSPA9 and ISCU through direct binding to HSC20. Binding of SDHAF1 to SDHB precedes and is necessary for recruitment of the iron-sulfur transfer complex by SDHAF1.</text>
</comment>
<comment type="subcellular location">
    <subcellularLocation>
        <location evidence="1">Mitochondrion matrix</location>
    </subcellularLocation>
</comment>
<comment type="similarity">
    <text evidence="4">Belongs to the complex I LYR family. SDHAF1 subfamily.</text>
</comment>
<evidence type="ECO:0000250" key="1">
    <source>
        <dbReference type="UniProtKB" id="A6NFY7"/>
    </source>
</evidence>
<evidence type="ECO:0000250" key="2">
    <source>
        <dbReference type="UniProtKB" id="Q3E785"/>
    </source>
</evidence>
<evidence type="ECO:0000256" key="3">
    <source>
        <dbReference type="SAM" id="MobiDB-lite"/>
    </source>
</evidence>
<evidence type="ECO:0000305" key="4"/>